<comment type="function">
    <text evidence="1">Catalyzes the NADPH-dependent reduction of 7-cyano-7-deazaguanine (preQ0) to 7-aminomethyl-7-deazaguanine (preQ1).</text>
</comment>
<comment type="catalytic activity">
    <reaction evidence="1">
        <text>7-aminomethyl-7-carbaguanine + 2 NADP(+) = 7-cyano-7-deazaguanine + 2 NADPH + 3 H(+)</text>
        <dbReference type="Rhea" id="RHEA:13409"/>
        <dbReference type="ChEBI" id="CHEBI:15378"/>
        <dbReference type="ChEBI" id="CHEBI:45075"/>
        <dbReference type="ChEBI" id="CHEBI:57783"/>
        <dbReference type="ChEBI" id="CHEBI:58349"/>
        <dbReference type="ChEBI" id="CHEBI:58703"/>
        <dbReference type="EC" id="1.7.1.13"/>
    </reaction>
</comment>
<comment type="pathway">
    <text evidence="1">tRNA modification; tRNA-queuosine biosynthesis.</text>
</comment>
<comment type="subcellular location">
    <subcellularLocation>
        <location evidence="1">Cytoplasm</location>
    </subcellularLocation>
</comment>
<comment type="similarity">
    <text evidence="1">Belongs to the GTP cyclohydrolase I family. QueF type 1 subfamily.</text>
</comment>
<organism>
    <name type="scientific">Bacillus cereus (strain AH820)</name>
    <dbReference type="NCBI Taxonomy" id="405535"/>
    <lineage>
        <taxon>Bacteria</taxon>
        <taxon>Bacillati</taxon>
        <taxon>Bacillota</taxon>
        <taxon>Bacilli</taxon>
        <taxon>Bacillales</taxon>
        <taxon>Bacillaceae</taxon>
        <taxon>Bacillus</taxon>
        <taxon>Bacillus cereus group</taxon>
    </lineage>
</organism>
<gene>
    <name evidence="1" type="primary">queF</name>
    <name type="ordered locus">BCAH820_1433</name>
</gene>
<keyword id="KW-0963">Cytoplasm</keyword>
<keyword id="KW-0521">NADP</keyword>
<keyword id="KW-0560">Oxidoreductase</keyword>
<keyword id="KW-0671">Queuosine biosynthesis</keyword>
<evidence type="ECO:0000255" key="1">
    <source>
        <dbReference type="HAMAP-Rule" id="MF_00818"/>
    </source>
</evidence>
<dbReference type="EC" id="1.7.1.13" evidence="1"/>
<dbReference type="EMBL" id="CP001283">
    <property type="protein sequence ID" value="ACK91453.1"/>
    <property type="molecule type" value="Genomic_DNA"/>
</dbReference>
<dbReference type="RefSeq" id="WP_000918895.1">
    <property type="nucleotide sequence ID" value="NC_011773.1"/>
</dbReference>
<dbReference type="SMR" id="B7JFS7"/>
<dbReference type="GeneID" id="93009696"/>
<dbReference type="KEGG" id="bcu:BCAH820_1433"/>
<dbReference type="HOGENOM" id="CLU_102489_0_1_9"/>
<dbReference type="UniPathway" id="UPA00392"/>
<dbReference type="Proteomes" id="UP000001363">
    <property type="component" value="Chromosome"/>
</dbReference>
<dbReference type="GO" id="GO:0005737">
    <property type="term" value="C:cytoplasm"/>
    <property type="evidence" value="ECO:0007669"/>
    <property type="project" value="UniProtKB-SubCell"/>
</dbReference>
<dbReference type="GO" id="GO:0033739">
    <property type="term" value="F:preQ1 synthase activity"/>
    <property type="evidence" value="ECO:0007669"/>
    <property type="project" value="UniProtKB-UniRule"/>
</dbReference>
<dbReference type="GO" id="GO:0008616">
    <property type="term" value="P:queuosine biosynthetic process"/>
    <property type="evidence" value="ECO:0007669"/>
    <property type="project" value="UniProtKB-UniRule"/>
</dbReference>
<dbReference type="GO" id="GO:0006400">
    <property type="term" value="P:tRNA modification"/>
    <property type="evidence" value="ECO:0007669"/>
    <property type="project" value="UniProtKB-UniRule"/>
</dbReference>
<dbReference type="Gene3D" id="3.30.1130.10">
    <property type="match status" value="1"/>
</dbReference>
<dbReference type="HAMAP" id="MF_00818">
    <property type="entry name" value="QueF_type1"/>
    <property type="match status" value="1"/>
</dbReference>
<dbReference type="InterPro" id="IPR043133">
    <property type="entry name" value="GTP-CH-I_C/QueF"/>
</dbReference>
<dbReference type="InterPro" id="IPR050084">
    <property type="entry name" value="NADPH_dep_7-cyano-7-deazaG_red"/>
</dbReference>
<dbReference type="InterPro" id="IPR029500">
    <property type="entry name" value="QueF"/>
</dbReference>
<dbReference type="InterPro" id="IPR016856">
    <property type="entry name" value="QueF_type1"/>
</dbReference>
<dbReference type="NCBIfam" id="TIGR03139">
    <property type="entry name" value="QueF-II"/>
    <property type="match status" value="1"/>
</dbReference>
<dbReference type="PANTHER" id="PTHR34354">
    <property type="entry name" value="NADPH-DEPENDENT 7-CYANO-7-DEAZAGUANINE REDUCTASE"/>
    <property type="match status" value="1"/>
</dbReference>
<dbReference type="PANTHER" id="PTHR34354:SF1">
    <property type="entry name" value="NADPH-DEPENDENT 7-CYANO-7-DEAZAGUANINE REDUCTASE"/>
    <property type="match status" value="1"/>
</dbReference>
<dbReference type="Pfam" id="PF14489">
    <property type="entry name" value="QueF"/>
    <property type="match status" value="1"/>
</dbReference>
<dbReference type="PIRSF" id="PIRSF027377">
    <property type="entry name" value="Nitrile_oxidored_QueF"/>
    <property type="match status" value="1"/>
</dbReference>
<dbReference type="SUPFAM" id="SSF55620">
    <property type="entry name" value="Tetrahydrobiopterin biosynthesis enzymes-like"/>
    <property type="match status" value="1"/>
</dbReference>
<sequence>MAGRLDEDLKDVTLLGNQNTKYLFEYSPEILEVFDNNHPNRDYFVKFNCPEFTSLCPKTGQPDFATIYISYIPEQRMVESKSLKLYLFSFRNHGDFHEDCMNVIMNDLIKLMDPRYIEVWGKFTPRGGISIDPYCNYGRPGTKYEQMADYRMMNHDLYPETIDNR</sequence>
<reference key="1">
    <citation type="submission" date="2008-10" db="EMBL/GenBank/DDBJ databases">
        <title>Genome sequence of Bacillus cereus AH820.</title>
        <authorList>
            <person name="Dodson R.J."/>
            <person name="Durkin A.S."/>
            <person name="Rosovitz M.J."/>
            <person name="Rasko D.A."/>
            <person name="Hoffmaster A."/>
            <person name="Ravel J."/>
            <person name="Sutton G."/>
        </authorList>
    </citation>
    <scope>NUCLEOTIDE SEQUENCE [LARGE SCALE GENOMIC DNA]</scope>
    <source>
        <strain>AH820</strain>
    </source>
</reference>
<feature type="chain" id="PRO_1000134292" description="NADPH-dependent 7-cyano-7-deazaguanine reductase">
    <location>
        <begin position="1"/>
        <end position="165"/>
    </location>
</feature>
<feature type="active site" description="Thioimide intermediate" evidence="1">
    <location>
        <position position="56"/>
    </location>
</feature>
<feature type="active site" description="Proton donor" evidence="1">
    <location>
        <position position="63"/>
    </location>
</feature>
<feature type="binding site" evidence="1">
    <location>
        <begin position="78"/>
        <end position="80"/>
    </location>
    <ligand>
        <name>substrate</name>
    </ligand>
</feature>
<feature type="binding site" evidence="1">
    <location>
        <begin position="97"/>
        <end position="98"/>
    </location>
    <ligand>
        <name>substrate</name>
    </ligand>
</feature>
<proteinExistence type="inferred from homology"/>
<protein>
    <recommendedName>
        <fullName evidence="1">NADPH-dependent 7-cyano-7-deazaguanine reductase</fullName>
        <ecNumber evidence="1">1.7.1.13</ecNumber>
    </recommendedName>
    <alternativeName>
        <fullName evidence="1">7-cyano-7-carbaguanine reductase</fullName>
    </alternativeName>
    <alternativeName>
        <fullName evidence="1">NADPH-dependent nitrile oxidoreductase</fullName>
    </alternativeName>
    <alternativeName>
        <fullName evidence="1">PreQ(0) reductase</fullName>
    </alternativeName>
</protein>
<name>QUEF_BACC0</name>
<accession>B7JFS7</accession>